<evidence type="ECO:0000305" key="1"/>
<keyword id="KW-0479">Metal-binding</keyword>
<keyword id="KW-0480">Metal-thiolate cluster</keyword>
<feature type="chain" id="PRO_0000197349" description="Metallothionein-A">
    <location>
        <begin position="1" status="less than"/>
        <end position="67"/>
    </location>
</feature>
<feature type="non-terminal residue">
    <location>
        <position position="1"/>
    </location>
</feature>
<protein>
    <recommendedName>
        <fullName>Metallothionein-A</fullName>
        <shortName>MTA</shortName>
    </recommendedName>
</protein>
<organism>
    <name type="scientific">Sphaerechinus granularis</name>
    <name type="common">Purple sea urchin</name>
    <dbReference type="NCBI Taxonomy" id="39374"/>
    <lineage>
        <taxon>Eukaryota</taxon>
        <taxon>Metazoa</taxon>
        <taxon>Echinodermata</taxon>
        <taxon>Eleutherozoa</taxon>
        <taxon>Echinozoa</taxon>
        <taxon>Echinoidea</taxon>
        <taxon>Euechinoidea</taxon>
        <taxon>Echinacea</taxon>
        <taxon>Temnopleuroida</taxon>
        <taxon>Toxopneustidae</taxon>
        <taxon>Sphaerechinus</taxon>
    </lineage>
</organism>
<proteinExistence type="evidence at transcript level"/>
<dbReference type="EMBL" id="Z66530">
    <property type="protein sequence ID" value="CAA91437.1"/>
    <property type="molecule type" value="mRNA"/>
</dbReference>
<dbReference type="PIR" id="T11547">
    <property type="entry name" value="T11547"/>
</dbReference>
<dbReference type="SMR" id="Q26497"/>
<dbReference type="GO" id="GO:0046872">
    <property type="term" value="F:metal ion binding"/>
    <property type="evidence" value="ECO:0007669"/>
    <property type="project" value="UniProtKB-KW"/>
</dbReference>
<dbReference type="InterPro" id="IPR017980">
    <property type="entry name" value="Metalthion_4_echinoid/annelid"/>
</dbReference>
<dbReference type="InterPro" id="IPR001396">
    <property type="entry name" value="Metalthion_4_echinoidea"/>
</dbReference>
<dbReference type="InterPro" id="IPR017854">
    <property type="entry name" value="Metalthion_dom_sf"/>
</dbReference>
<dbReference type="Pfam" id="PF05522">
    <property type="entry name" value="Metallothio_6"/>
    <property type="match status" value="1"/>
</dbReference>
<dbReference type="PRINTS" id="PR00873">
    <property type="entry name" value="MTECHINOIDEA"/>
</dbReference>
<dbReference type="SUPFAM" id="SSF57868">
    <property type="entry name" value="Metallothionein"/>
    <property type="match status" value="2"/>
</dbReference>
<comment type="function">
    <text>Metallothioneins have a high content of cysteine residues that bind various heavy metals.</text>
</comment>
<comment type="similarity">
    <text evidence="1">Belongs to the metallothionein superfamily. Type 4 family.</text>
</comment>
<accession>Q26497</accession>
<name>MTA_SPHGR</name>
<reference key="1">
    <citation type="journal article" date="1997" name="Cell. Mol. Life Sci.">
        <title>PCR amplification and cloning of metallothionein complementary DNAs in temperate and Antarctic sea urchin characterized by a large difference in egg metallothionein content.</title>
        <authorList>
            <person name="Scudiero R."/>
            <person name="Capasso C."/>
            <person name="Carginale V."/>
            <person name="Riggio M."/>
            <person name="Capasso A."/>
            <person name="Ciaramella M."/>
            <person name="Filosa S."/>
            <person name="Parisi E."/>
        </authorList>
    </citation>
    <scope>NUCLEOTIDE SEQUENCE [MRNA]</scope>
    <source>
        <tissue>Egg</tissue>
    </source>
</reference>
<sequence length="67" mass="6561">PGPDVKCVCCQDGKECPCKGGECCITGSCCKEGDGLCCGKCSNAACKCADGCKCGSGCSCTLGNCTC</sequence>